<protein>
    <recommendedName>
        <fullName>DnaJ homolog subfamily C member 17</fullName>
    </recommendedName>
</protein>
<reference key="1">
    <citation type="journal article" date="2004" name="Nat. Genet.">
        <title>Complete sequencing and characterization of 21,243 full-length human cDNAs.</title>
        <authorList>
            <person name="Ota T."/>
            <person name="Suzuki Y."/>
            <person name="Nishikawa T."/>
            <person name="Otsuki T."/>
            <person name="Sugiyama T."/>
            <person name="Irie R."/>
            <person name="Wakamatsu A."/>
            <person name="Hayashi K."/>
            <person name="Sato H."/>
            <person name="Nagai K."/>
            <person name="Kimura K."/>
            <person name="Makita H."/>
            <person name="Sekine M."/>
            <person name="Obayashi M."/>
            <person name="Nishi T."/>
            <person name="Shibahara T."/>
            <person name="Tanaka T."/>
            <person name="Ishii S."/>
            <person name="Yamamoto J."/>
            <person name="Saito K."/>
            <person name="Kawai Y."/>
            <person name="Isono Y."/>
            <person name="Nakamura Y."/>
            <person name="Nagahari K."/>
            <person name="Murakami K."/>
            <person name="Yasuda T."/>
            <person name="Iwayanagi T."/>
            <person name="Wagatsuma M."/>
            <person name="Shiratori A."/>
            <person name="Sudo H."/>
            <person name="Hosoiri T."/>
            <person name="Kaku Y."/>
            <person name="Kodaira H."/>
            <person name="Kondo H."/>
            <person name="Sugawara M."/>
            <person name="Takahashi M."/>
            <person name="Kanda K."/>
            <person name="Yokoi T."/>
            <person name="Furuya T."/>
            <person name="Kikkawa E."/>
            <person name="Omura Y."/>
            <person name="Abe K."/>
            <person name="Kamihara K."/>
            <person name="Katsuta N."/>
            <person name="Sato K."/>
            <person name="Tanikawa M."/>
            <person name="Yamazaki M."/>
            <person name="Ninomiya K."/>
            <person name="Ishibashi T."/>
            <person name="Yamashita H."/>
            <person name="Murakawa K."/>
            <person name="Fujimori K."/>
            <person name="Tanai H."/>
            <person name="Kimata M."/>
            <person name="Watanabe M."/>
            <person name="Hiraoka S."/>
            <person name="Chiba Y."/>
            <person name="Ishida S."/>
            <person name="Ono Y."/>
            <person name="Takiguchi S."/>
            <person name="Watanabe S."/>
            <person name="Yosida M."/>
            <person name="Hotuta T."/>
            <person name="Kusano J."/>
            <person name="Kanehori K."/>
            <person name="Takahashi-Fujii A."/>
            <person name="Hara H."/>
            <person name="Tanase T.-O."/>
            <person name="Nomura Y."/>
            <person name="Togiya S."/>
            <person name="Komai F."/>
            <person name="Hara R."/>
            <person name="Takeuchi K."/>
            <person name="Arita M."/>
            <person name="Imose N."/>
            <person name="Musashino K."/>
            <person name="Yuuki H."/>
            <person name="Oshima A."/>
            <person name="Sasaki N."/>
            <person name="Aotsuka S."/>
            <person name="Yoshikawa Y."/>
            <person name="Matsunawa H."/>
            <person name="Ichihara T."/>
            <person name="Shiohata N."/>
            <person name="Sano S."/>
            <person name="Moriya S."/>
            <person name="Momiyama H."/>
            <person name="Satoh N."/>
            <person name="Takami S."/>
            <person name="Terashima Y."/>
            <person name="Suzuki O."/>
            <person name="Nakagawa S."/>
            <person name="Senoh A."/>
            <person name="Mizoguchi H."/>
            <person name="Goto Y."/>
            <person name="Shimizu F."/>
            <person name="Wakebe H."/>
            <person name="Hishigaki H."/>
            <person name="Watanabe T."/>
            <person name="Sugiyama A."/>
            <person name="Takemoto M."/>
            <person name="Kawakami B."/>
            <person name="Yamazaki M."/>
            <person name="Watanabe K."/>
            <person name="Kumagai A."/>
            <person name="Itakura S."/>
            <person name="Fukuzumi Y."/>
            <person name="Fujimori Y."/>
            <person name="Komiyama M."/>
            <person name="Tashiro H."/>
            <person name="Tanigami A."/>
            <person name="Fujiwara T."/>
            <person name="Ono T."/>
            <person name="Yamada K."/>
            <person name="Fujii Y."/>
            <person name="Ozaki K."/>
            <person name="Hirao M."/>
            <person name="Ohmori Y."/>
            <person name="Kawabata A."/>
            <person name="Hikiji T."/>
            <person name="Kobatake N."/>
            <person name="Inagaki H."/>
            <person name="Ikema Y."/>
            <person name="Okamoto S."/>
            <person name="Okitani R."/>
            <person name="Kawakami T."/>
            <person name="Noguchi S."/>
            <person name="Itoh T."/>
            <person name="Shigeta K."/>
            <person name="Senba T."/>
            <person name="Matsumura K."/>
            <person name="Nakajima Y."/>
            <person name="Mizuno T."/>
            <person name="Morinaga M."/>
            <person name="Sasaki M."/>
            <person name="Togashi T."/>
            <person name="Oyama M."/>
            <person name="Hata H."/>
            <person name="Watanabe M."/>
            <person name="Komatsu T."/>
            <person name="Mizushima-Sugano J."/>
            <person name="Satoh T."/>
            <person name="Shirai Y."/>
            <person name="Takahashi Y."/>
            <person name="Nakagawa K."/>
            <person name="Okumura K."/>
            <person name="Nagase T."/>
            <person name="Nomura N."/>
            <person name="Kikuchi H."/>
            <person name="Masuho Y."/>
            <person name="Yamashita R."/>
            <person name="Nakai K."/>
            <person name="Yada T."/>
            <person name="Nakamura Y."/>
            <person name="Ohara O."/>
            <person name="Isogai T."/>
            <person name="Sugano S."/>
        </authorList>
    </citation>
    <scope>NUCLEOTIDE SEQUENCE [LARGE SCALE MRNA]</scope>
</reference>
<reference key="2">
    <citation type="journal article" date="2004" name="Genome Res.">
        <title>The status, quality, and expansion of the NIH full-length cDNA project: the Mammalian Gene Collection (MGC).</title>
        <authorList>
            <consortium name="The MGC Project Team"/>
        </authorList>
    </citation>
    <scope>NUCLEOTIDE SEQUENCE [LARGE SCALE MRNA]</scope>
    <source>
        <tissue>Brain</tissue>
    </source>
</reference>
<reference key="3">
    <citation type="journal article" date="2006" name="Cell">
        <title>Global, in vivo, and site-specific phosphorylation dynamics in signaling networks.</title>
        <authorList>
            <person name="Olsen J.V."/>
            <person name="Blagoev B."/>
            <person name="Gnad F."/>
            <person name="Macek B."/>
            <person name="Kumar C."/>
            <person name="Mortensen P."/>
            <person name="Mann M."/>
        </authorList>
    </citation>
    <scope>PHOSPHORYLATION [LARGE SCALE ANALYSIS] AT SER-112</scope>
    <scope>IDENTIFICATION BY MASS SPECTROMETRY [LARGE SCALE ANALYSIS]</scope>
    <source>
        <tissue>Cervix carcinoma</tissue>
    </source>
</reference>
<reference key="4">
    <citation type="journal article" date="2008" name="J. Proteome Res.">
        <title>Phosphorylation analysis of primary human T lymphocytes using sequential IMAC and titanium oxide enrichment.</title>
        <authorList>
            <person name="Carrascal M."/>
            <person name="Ovelleiro D."/>
            <person name="Casas V."/>
            <person name="Gay M."/>
            <person name="Abian J."/>
        </authorList>
    </citation>
    <scope>PHOSPHORYLATION [LARGE SCALE ANALYSIS] AT SER-112</scope>
    <scope>IDENTIFICATION BY MASS SPECTROMETRY [LARGE SCALE ANALYSIS]</scope>
    <source>
        <tissue>T-cell</tissue>
    </source>
</reference>
<reference key="5">
    <citation type="journal article" date="2008" name="Proc. Natl. Acad. Sci. U.S.A.">
        <title>A quantitative atlas of mitotic phosphorylation.</title>
        <authorList>
            <person name="Dephoure N."/>
            <person name="Zhou C."/>
            <person name="Villen J."/>
            <person name="Beausoleil S.A."/>
            <person name="Bakalarski C.E."/>
            <person name="Elledge S.J."/>
            <person name="Gygi S.P."/>
        </authorList>
    </citation>
    <scope>PHOSPHORYLATION [LARGE SCALE ANALYSIS] AT SER-112</scope>
    <scope>IDENTIFICATION BY MASS SPECTROMETRY [LARGE SCALE ANALYSIS]</scope>
    <source>
        <tissue>Cervix carcinoma</tissue>
    </source>
</reference>
<reference key="6">
    <citation type="journal article" date="2009" name="Sci. Signal.">
        <title>Quantitative phosphoproteomic analysis of T cell receptor signaling reveals system-wide modulation of protein-protein interactions.</title>
        <authorList>
            <person name="Mayya V."/>
            <person name="Lundgren D.H."/>
            <person name="Hwang S.-I."/>
            <person name="Rezaul K."/>
            <person name="Wu L."/>
            <person name="Eng J.K."/>
            <person name="Rodionov V."/>
            <person name="Han D.K."/>
        </authorList>
    </citation>
    <scope>PHOSPHORYLATION [LARGE SCALE ANALYSIS] AT SER-112</scope>
    <scope>IDENTIFICATION BY MASS SPECTROMETRY [LARGE SCALE ANALYSIS]</scope>
    <source>
        <tissue>Leukemic T-cell</tissue>
    </source>
</reference>
<reference key="7">
    <citation type="journal article" date="2010" name="Sci. Signal.">
        <title>Quantitative phosphoproteomics reveals widespread full phosphorylation site occupancy during mitosis.</title>
        <authorList>
            <person name="Olsen J.V."/>
            <person name="Vermeulen M."/>
            <person name="Santamaria A."/>
            <person name="Kumar C."/>
            <person name="Miller M.L."/>
            <person name="Jensen L.J."/>
            <person name="Gnad F."/>
            <person name="Cox J."/>
            <person name="Jensen T.S."/>
            <person name="Nigg E.A."/>
            <person name="Brunak S."/>
            <person name="Mann M."/>
        </authorList>
    </citation>
    <scope>PHOSPHORYLATION [LARGE SCALE ANALYSIS] AT SER-112</scope>
    <scope>IDENTIFICATION BY MASS SPECTROMETRY [LARGE SCALE ANALYSIS]</scope>
    <source>
        <tissue>Cervix carcinoma</tissue>
    </source>
</reference>
<reference key="8">
    <citation type="journal article" date="2011" name="BMC Syst. Biol.">
        <title>Initial characterization of the human central proteome.</title>
        <authorList>
            <person name="Burkard T.R."/>
            <person name="Planyavsky M."/>
            <person name="Kaupe I."/>
            <person name="Breitwieser F.P."/>
            <person name="Buerckstuemmer T."/>
            <person name="Bennett K.L."/>
            <person name="Superti-Furga G."/>
            <person name="Colinge J."/>
        </authorList>
    </citation>
    <scope>IDENTIFICATION BY MASS SPECTROMETRY [LARGE SCALE ANALYSIS]</scope>
</reference>
<reference key="9">
    <citation type="journal article" date="2013" name="J. Proteome Res.">
        <title>Toward a comprehensive characterization of a human cancer cell phosphoproteome.</title>
        <authorList>
            <person name="Zhou H."/>
            <person name="Di Palma S."/>
            <person name="Preisinger C."/>
            <person name="Peng M."/>
            <person name="Polat A.N."/>
            <person name="Heck A.J."/>
            <person name="Mohammed S."/>
        </authorList>
    </citation>
    <scope>PHOSPHORYLATION [LARGE SCALE ANALYSIS] AT SER-112</scope>
    <scope>IDENTIFICATION BY MASS SPECTROMETRY [LARGE SCALE ANALYSIS]</scope>
    <source>
        <tissue>Cervix carcinoma</tissue>
        <tissue>Erythroleukemia</tissue>
    </source>
</reference>
<reference key="10">
    <citation type="journal article" date="2014" name="Mol. Cell. Proteomics">
        <title>Immunoaffinity enrichment and mass spectrometry analysis of protein methylation.</title>
        <authorList>
            <person name="Guo A."/>
            <person name="Gu H."/>
            <person name="Zhou J."/>
            <person name="Mulhern D."/>
            <person name="Wang Y."/>
            <person name="Lee K.A."/>
            <person name="Yang V."/>
            <person name="Aguiar M."/>
            <person name="Kornhauser J."/>
            <person name="Jia X."/>
            <person name="Ren J."/>
            <person name="Beausoleil S.A."/>
            <person name="Silva J.C."/>
            <person name="Vemulapalli V."/>
            <person name="Bedford M.T."/>
            <person name="Comb M.J."/>
        </authorList>
    </citation>
    <scope>METHYLATION [LARGE SCALE ANALYSIS] AT LYS-264</scope>
    <scope>IDENTIFICATION BY MASS SPECTROMETRY [LARGE SCALE ANALYSIS]</scope>
    <source>
        <tissue>Colon carcinoma</tissue>
    </source>
</reference>
<reference key="11">
    <citation type="submission" date="2006-06" db="PDB data bank">
        <title>Solution structure of RNA binding domain in hypothetical protein FLJ10634.</title>
        <authorList>
            <consortium name="RIKEN structural genomics initiative (RSGI)"/>
        </authorList>
    </citation>
    <scope>STRUCTURE BY NMR OF 162-258</scope>
</reference>
<feature type="chain" id="PRO_0000247118" description="DnaJ homolog subfamily C member 17">
    <location>
        <begin position="1"/>
        <end position="304"/>
    </location>
</feature>
<feature type="domain" description="J" evidence="3">
    <location>
        <begin position="11"/>
        <end position="76"/>
    </location>
</feature>
<feature type="domain" description="RRM">
    <location>
        <begin position="178"/>
        <end position="249"/>
    </location>
</feature>
<feature type="region of interest" description="Disordered" evidence="4">
    <location>
        <begin position="79"/>
        <end position="145"/>
    </location>
</feature>
<feature type="compositionally biased region" description="Basic and acidic residues" evidence="4">
    <location>
        <begin position="79"/>
        <end position="106"/>
    </location>
</feature>
<feature type="compositionally biased region" description="Basic and acidic residues" evidence="4">
    <location>
        <begin position="118"/>
        <end position="145"/>
    </location>
</feature>
<feature type="modified residue" description="Phosphoserine" evidence="5 6 7 8 9 10">
    <location>
        <position position="112"/>
    </location>
</feature>
<feature type="modified residue" description="N6-methyllysine" evidence="11">
    <location>
        <position position="264"/>
    </location>
</feature>
<feature type="strand" evidence="12">
    <location>
        <begin position="172"/>
        <end position="176"/>
    </location>
</feature>
<feature type="helix" evidence="12">
    <location>
        <begin position="191"/>
        <end position="199"/>
    </location>
</feature>
<feature type="strand" evidence="12">
    <location>
        <begin position="204"/>
        <end position="222"/>
    </location>
</feature>
<feature type="helix" evidence="12">
    <location>
        <begin position="224"/>
        <end position="232"/>
    </location>
</feature>
<feature type="strand" evidence="12">
    <location>
        <begin position="238"/>
        <end position="241"/>
    </location>
</feature>
<feature type="strand" evidence="12">
    <location>
        <begin position="243"/>
        <end position="245"/>
    </location>
</feature>
<keyword id="KW-0002">3D-structure</keyword>
<keyword id="KW-0143">Chaperone</keyword>
<keyword id="KW-0963">Cytoplasm</keyword>
<keyword id="KW-0488">Methylation</keyword>
<keyword id="KW-0539">Nucleus</keyword>
<keyword id="KW-0597">Phosphoprotein</keyword>
<keyword id="KW-1267">Proteomics identification</keyword>
<keyword id="KW-1185">Reference proteome</keyword>
<keyword id="KW-0694">RNA-binding</keyword>
<keyword id="KW-0804">Transcription</keyword>
<keyword id="KW-0805">Transcription regulation</keyword>
<gene>
    <name type="primary">DNAJC17</name>
</gene>
<comment type="function">
    <text evidence="2">May negatively affect PAX8-induced thyroglobulin/TG transcription.</text>
</comment>
<comment type="interaction">
    <interactant intactId="EBI-12260682">
        <id>Q9NVM6</id>
    </interactant>
    <interactant intactId="EBI-16439278">
        <id>Q6FHY5</id>
        <label>MEOX2</label>
    </interactant>
    <organismsDiffer>false</organismsDiffer>
    <experiments>3</experiments>
</comment>
<comment type="subcellular location">
    <subcellularLocation>
        <location evidence="1">Cytoplasm</location>
    </subcellularLocation>
    <subcellularLocation>
        <location evidence="1">Nucleus</location>
    </subcellularLocation>
    <text evidence="1">Predominantly nuclear.</text>
</comment>
<evidence type="ECO:0000250" key="1">
    <source>
        <dbReference type="UniProtKB" id="D3ZSC8"/>
    </source>
</evidence>
<evidence type="ECO:0000250" key="2">
    <source>
        <dbReference type="UniProtKB" id="Q91WT4"/>
    </source>
</evidence>
<evidence type="ECO:0000255" key="3">
    <source>
        <dbReference type="PROSITE-ProRule" id="PRU00286"/>
    </source>
</evidence>
<evidence type="ECO:0000256" key="4">
    <source>
        <dbReference type="SAM" id="MobiDB-lite"/>
    </source>
</evidence>
<evidence type="ECO:0007744" key="5">
    <source>
    </source>
</evidence>
<evidence type="ECO:0007744" key="6">
    <source>
    </source>
</evidence>
<evidence type="ECO:0007744" key="7">
    <source>
    </source>
</evidence>
<evidence type="ECO:0007744" key="8">
    <source>
    </source>
</evidence>
<evidence type="ECO:0007744" key="9">
    <source>
    </source>
</evidence>
<evidence type="ECO:0007744" key="10">
    <source>
    </source>
</evidence>
<evidence type="ECO:0007744" key="11">
    <source>
    </source>
</evidence>
<evidence type="ECO:0007829" key="12">
    <source>
        <dbReference type="PDB" id="2D9O"/>
    </source>
</evidence>
<proteinExistence type="evidence at protein level"/>
<name>DJC17_HUMAN</name>
<sequence length="304" mass="34687">MAVTKELLQMDLYALLGIEEKAADKEVKKAYRQKALSCHPDKNPDNPRAAELFHQLSQALEVLTDAAARAAYDKVRKAKKQAAERTQKLDEKRKKVKLDLEARERQAQAQESEEEEESRSTRTLEQEIERLREEGSRQLEEQQRLIREQIRQERDQRLRGKAENTEGQGTPKLKLKWKCKKEDESKGGYSKDVLLRLLQKYGEVLNLVLSSKKPGTAVVEFATVKAAELAVQNEVGLVDNPLKISWLEGQPQDAVGRSHSGLSKGSVLSERDYESLVMMRMRQAAERQQLIARMQQEDQEGPPT</sequence>
<accession>Q9NVM6</accession>
<dbReference type="EMBL" id="AK001496">
    <property type="protein sequence ID" value="BAA91724.1"/>
    <property type="molecule type" value="mRNA"/>
</dbReference>
<dbReference type="EMBL" id="BC000048">
    <property type="protein sequence ID" value="AAH00048.1"/>
    <property type="molecule type" value="mRNA"/>
</dbReference>
<dbReference type="CCDS" id="CCDS10065.1"/>
<dbReference type="RefSeq" id="NP_060633.1">
    <property type="nucleotide sequence ID" value="NM_018163.3"/>
</dbReference>
<dbReference type="PDB" id="2D9O">
    <property type="method" value="NMR"/>
    <property type="chains" value="A=168-254"/>
</dbReference>
<dbReference type="PDBsum" id="2D9O"/>
<dbReference type="SMR" id="Q9NVM6"/>
<dbReference type="BioGRID" id="120489">
    <property type="interactions" value="139"/>
</dbReference>
<dbReference type="FunCoup" id="Q9NVM6">
    <property type="interactions" value="1760"/>
</dbReference>
<dbReference type="IntAct" id="Q9NVM6">
    <property type="interactions" value="41"/>
</dbReference>
<dbReference type="MINT" id="Q9NVM6"/>
<dbReference type="STRING" id="9606.ENSP00000220496"/>
<dbReference type="iPTMnet" id="Q9NVM6"/>
<dbReference type="PhosphoSitePlus" id="Q9NVM6"/>
<dbReference type="BioMuta" id="DNAJC17"/>
<dbReference type="DMDM" id="74761740"/>
<dbReference type="jPOST" id="Q9NVM6"/>
<dbReference type="MassIVE" id="Q9NVM6"/>
<dbReference type="PaxDb" id="9606-ENSP00000220496"/>
<dbReference type="PeptideAtlas" id="Q9NVM6"/>
<dbReference type="ProteomicsDB" id="82830"/>
<dbReference type="Pumba" id="Q9NVM6"/>
<dbReference type="Antibodypedia" id="49787">
    <property type="antibodies" value="169 antibodies from 24 providers"/>
</dbReference>
<dbReference type="DNASU" id="55192"/>
<dbReference type="Ensembl" id="ENST00000220496.9">
    <property type="protein sequence ID" value="ENSP00000220496.4"/>
    <property type="gene ID" value="ENSG00000104129.10"/>
</dbReference>
<dbReference type="GeneID" id="55192"/>
<dbReference type="KEGG" id="hsa:55192"/>
<dbReference type="MANE-Select" id="ENST00000220496.9">
    <property type="protein sequence ID" value="ENSP00000220496.4"/>
    <property type="RefSeq nucleotide sequence ID" value="NM_018163.3"/>
    <property type="RefSeq protein sequence ID" value="NP_060633.1"/>
</dbReference>
<dbReference type="UCSC" id="uc001zms.3">
    <property type="organism name" value="human"/>
</dbReference>
<dbReference type="AGR" id="HGNC:25556"/>
<dbReference type="CTD" id="55192"/>
<dbReference type="DisGeNET" id="55192"/>
<dbReference type="GeneCards" id="DNAJC17"/>
<dbReference type="HGNC" id="HGNC:25556">
    <property type="gene designation" value="DNAJC17"/>
</dbReference>
<dbReference type="HPA" id="ENSG00000104129">
    <property type="expression patterns" value="Low tissue specificity"/>
</dbReference>
<dbReference type="MalaCards" id="DNAJC17"/>
<dbReference type="MIM" id="616844">
    <property type="type" value="gene"/>
</dbReference>
<dbReference type="neXtProt" id="NX_Q9NVM6"/>
<dbReference type="OpenTargets" id="ENSG00000104129"/>
<dbReference type="PharmGKB" id="PA142671965"/>
<dbReference type="VEuPathDB" id="HostDB:ENSG00000104129"/>
<dbReference type="eggNOG" id="KOG0691">
    <property type="taxonomic scope" value="Eukaryota"/>
</dbReference>
<dbReference type="GeneTree" id="ENSGT00940000155132"/>
<dbReference type="HOGENOM" id="CLU_045732_1_0_1"/>
<dbReference type="InParanoid" id="Q9NVM6"/>
<dbReference type="OMA" id="NPLHFQW"/>
<dbReference type="OrthoDB" id="259708at2759"/>
<dbReference type="PAN-GO" id="Q9NVM6">
    <property type="GO annotations" value="2 GO annotations based on evolutionary models"/>
</dbReference>
<dbReference type="PhylomeDB" id="Q9NVM6"/>
<dbReference type="TreeFam" id="TF321770"/>
<dbReference type="PathwayCommons" id="Q9NVM6"/>
<dbReference type="SignaLink" id="Q9NVM6"/>
<dbReference type="BioGRID-ORCS" id="55192">
    <property type="hits" value="752 hits in 1175 CRISPR screens"/>
</dbReference>
<dbReference type="CD-CODE" id="804901D1">
    <property type="entry name" value="Nuclear speckle"/>
</dbReference>
<dbReference type="ChiTaRS" id="DNAJC17">
    <property type="organism name" value="human"/>
</dbReference>
<dbReference type="EvolutionaryTrace" id="Q9NVM6"/>
<dbReference type="GenomeRNAi" id="55192"/>
<dbReference type="Pharos" id="Q9NVM6">
    <property type="development level" value="Tbio"/>
</dbReference>
<dbReference type="PRO" id="PR:Q9NVM6"/>
<dbReference type="Proteomes" id="UP000005640">
    <property type="component" value="Chromosome 15"/>
</dbReference>
<dbReference type="RNAct" id="Q9NVM6">
    <property type="molecule type" value="protein"/>
</dbReference>
<dbReference type="Bgee" id="ENSG00000104129">
    <property type="expression patterns" value="Expressed in sural nerve and 114 other cell types or tissues"/>
</dbReference>
<dbReference type="ExpressionAtlas" id="Q9NVM6">
    <property type="expression patterns" value="baseline and differential"/>
</dbReference>
<dbReference type="GO" id="GO:0005737">
    <property type="term" value="C:cytoplasm"/>
    <property type="evidence" value="ECO:0007669"/>
    <property type="project" value="UniProtKB-SubCell"/>
</dbReference>
<dbReference type="GO" id="GO:0005681">
    <property type="term" value="C:spliceosomal complex"/>
    <property type="evidence" value="ECO:0000318"/>
    <property type="project" value="GO_Central"/>
</dbReference>
<dbReference type="GO" id="GO:0003723">
    <property type="term" value="F:RNA binding"/>
    <property type="evidence" value="ECO:0007669"/>
    <property type="project" value="UniProtKB-KW"/>
</dbReference>
<dbReference type="GO" id="GO:0000122">
    <property type="term" value="P:negative regulation of transcription by RNA polymerase II"/>
    <property type="evidence" value="ECO:0007669"/>
    <property type="project" value="Ensembl"/>
</dbReference>
<dbReference type="GO" id="GO:0000390">
    <property type="term" value="P:spliceosomal complex disassembly"/>
    <property type="evidence" value="ECO:0000318"/>
    <property type="project" value="GO_Central"/>
</dbReference>
<dbReference type="CDD" id="cd06257">
    <property type="entry name" value="DnaJ"/>
    <property type="match status" value="1"/>
</dbReference>
<dbReference type="CDD" id="cd12429">
    <property type="entry name" value="RRM_DNAJC17"/>
    <property type="match status" value="1"/>
</dbReference>
<dbReference type="FunFam" id="1.10.287.110:FF:000059">
    <property type="entry name" value="dnaJ homolog subfamily C member 17"/>
    <property type="match status" value="1"/>
</dbReference>
<dbReference type="Gene3D" id="3.30.70.330">
    <property type="match status" value="1"/>
</dbReference>
<dbReference type="Gene3D" id="1.10.287.110">
    <property type="entry name" value="DnaJ domain"/>
    <property type="match status" value="1"/>
</dbReference>
<dbReference type="InterPro" id="IPR001623">
    <property type="entry name" value="DnaJ_domain"/>
</dbReference>
<dbReference type="InterPro" id="IPR034254">
    <property type="entry name" value="DNAJC17_RRM"/>
</dbReference>
<dbReference type="InterPro" id="IPR036869">
    <property type="entry name" value="J_dom_sf"/>
</dbReference>
<dbReference type="InterPro" id="IPR012677">
    <property type="entry name" value="Nucleotide-bd_a/b_plait_sf"/>
</dbReference>
<dbReference type="InterPro" id="IPR052094">
    <property type="entry name" value="Pre-mRNA-splicing_ERAD"/>
</dbReference>
<dbReference type="InterPro" id="IPR035979">
    <property type="entry name" value="RBD_domain_sf"/>
</dbReference>
<dbReference type="InterPro" id="IPR000504">
    <property type="entry name" value="RRM_dom"/>
</dbReference>
<dbReference type="PANTHER" id="PTHR44313">
    <property type="entry name" value="DNAJ HOMOLOG SUBFAMILY C MEMBER 17"/>
    <property type="match status" value="1"/>
</dbReference>
<dbReference type="PANTHER" id="PTHR44313:SF1">
    <property type="entry name" value="DNAJ HOMOLOG SUBFAMILY C MEMBER 17"/>
    <property type="match status" value="1"/>
</dbReference>
<dbReference type="Pfam" id="PF00226">
    <property type="entry name" value="DnaJ"/>
    <property type="match status" value="1"/>
</dbReference>
<dbReference type="Pfam" id="PF00076">
    <property type="entry name" value="RRM_1"/>
    <property type="match status" value="1"/>
</dbReference>
<dbReference type="PRINTS" id="PR00625">
    <property type="entry name" value="JDOMAIN"/>
</dbReference>
<dbReference type="SMART" id="SM00271">
    <property type="entry name" value="DnaJ"/>
    <property type="match status" value="1"/>
</dbReference>
<dbReference type="SUPFAM" id="SSF46565">
    <property type="entry name" value="Chaperone J-domain"/>
    <property type="match status" value="1"/>
</dbReference>
<dbReference type="SUPFAM" id="SSF54928">
    <property type="entry name" value="RNA-binding domain, RBD"/>
    <property type="match status" value="1"/>
</dbReference>
<dbReference type="PROSITE" id="PS50076">
    <property type="entry name" value="DNAJ_2"/>
    <property type="match status" value="1"/>
</dbReference>
<organism>
    <name type="scientific">Homo sapiens</name>
    <name type="common">Human</name>
    <dbReference type="NCBI Taxonomy" id="9606"/>
    <lineage>
        <taxon>Eukaryota</taxon>
        <taxon>Metazoa</taxon>
        <taxon>Chordata</taxon>
        <taxon>Craniata</taxon>
        <taxon>Vertebrata</taxon>
        <taxon>Euteleostomi</taxon>
        <taxon>Mammalia</taxon>
        <taxon>Eutheria</taxon>
        <taxon>Euarchontoglires</taxon>
        <taxon>Primates</taxon>
        <taxon>Haplorrhini</taxon>
        <taxon>Catarrhini</taxon>
        <taxon>Hominidae</taxon>
        <taxon>Homo</taxon>
    </lineage>
</organism>